<keyword id="KW-0028">Amino-acid biosynthesis</keyword>
<keyword id="KW-0963">Cytoplasm</keyword>
<keyword id="KW-0368">Histidine biosynthesis</keyword>
<keyword id="KW-1185">Reference proteome</keyword>
<name>HISZ_METCA</name>
<feature type="chain" id="PRO_0000242840" description="ATP phosphoribosyltransferase regulatory subunit">
    <location>
        <begin position="1"/>
        <end position="406"/>
    </location>
</feature>
<protein>
    <recommendedName>
        <fullName evidence="1">ATP phosphoribosyltransferase regulatory subunit</fullName>
    </recommendedName>
</protein>
<dbReference type="EMBL" id="AE017282">
    <property type="protein sequence ID" value="AAU91989.1"/>
    <property type="molecule type" value="Genomic_DNA"/>
</dbReference>
<dbReference type="RefSeq" id="WP_010961224.1">
    <property type="nucleotide sequence ID" value="NC_002977.6"/>
</dbReference>
<dbReference type="SMR" id="Q606N7"/>
<dbReference type="STRING" id="243233.MCA1979"/>
<dbReference type="GeneID" id="88224209"/>
<dbReference type="KEGG" id="mca:MCA1979"/>
<dbReference type="eggNOG" id="COG3705">
    <property type="taxonomic scope" value="Bacteria"/>
</dbReference>
<dbReference type="HOGENOM" id="CLU_025113_0_1_6"/>
<dbReference type="UniPathway" id="UPA00031">
    <property type="reaction ID" value="UER00006"/>
</dbReference>
<dbReference type="Proteomes" id="UP000006821">
    <property type="component" value="Chromosome"/>
</dbReference>
<dbReference type="GO" id="GO:0005737">
    <property type="term" value="C:cytoplasm"/>
    <property type="evidence" value="ECO:0007669"/>
    <property type="project" value="UniProtKB-SubCell"/>
</dbReference>
<dbReference type="GO" id="GO:0004821">
    <property type="term" value="F:histidine-tRNA ligase activity"/>
    <property type="evidence" value="ECO:0007669"/>
    <property type="project" value="TreeGrafter"/>
</dbReference>
<dbReference type="GO" id="GO:0006427">
    <property type="term" value="P:histidyl-tRNA aminoacylation"/>
    <property type="evidence" value="ECO:0007669"/>
    <property type="project" value="TreeGrafter"/>
</dbReference>
<dbReference type="GO" id="GO:0000105">
    <property type="term" value="P:L-histidine biosynthetic process"/>
    <property type="evidence" value="ECO:0007669"/>
    <property type="project" value="UniProtKB-UniRule"/>
</dbReference>
<dbReference type="CDD" id="cd00773">
    <property type="entry name" value="HisRS-like_core"/>
    <property type="match status" value="1"/>
</dbReference>
<dbReference type="Gene3D" id="3.30.930.10">
    <property type="entry name" value="Bira Bifunctional Protein, Domain 2"/>
    <property type="match status" value="1"/>
</dbReference>
<dbReference type="HAMAP" id="MF_00125">
    <property type="entry name" value="HisZ"/>
    <property type="match status" value="1"/>
</dbReference>
<dbReference type="InterPro" id="IPR045864">
    <property type="entry name" value="aa-tRNA-synth_II/BPL/LPL"/>
</dbReference>
<dbReference type="InterPro" id="IPR041715">
    <property type="entry name" value="HisRS-like_core"/>
</dbReference>
<dbReference type="InterPro" id="IPR004516">
    <property type="entry name" value="HisRS/HisZ"/>
</dbReference>
<dbReference type="InterPro" id="IPR004517">
    <property type="entry name" value="HisZ"/>
</dbReference>
<dbReference type="NCBIfam" id="TIGR00443">
    <property type="entry name" value="hisZ_biosyn_reg"/>
    <property type="match status" value="1"/>
</dbReference>
<dbReference type="NCBIfam" id="NF008935">
    <property type="entry name" value="PRK12292.1-1"/>
    <property type="match status" value="1"/>
</dbReference>
<dbReference type="NCBIfam" id="NF009086">
    <property type="entry name" value="PRK12421.1"/>
    <property type="match status" value="1"/>
</dbReference>
<dbReference type="PANTHER" id="PTHR43707:SF1">
    <property type="entry name" value="HISTIDINE--TRNA LIGASE, MITOCHONDRIAL-RELATED"/>
    <property type="match status" value="1"/>
</dbReference>
<dbReference type="PANTHER" id="PTHR43707">
    <property type="entry name" value="HISTIDYL-TRNA SYNTHETASE"/>
    <property type="match status" value="1"/>
</dbReference>
<dbReference type="Pfam" id="PF13393">
    <property type="entry name" value="tRNA-synt_His"/>
    <property type="match status" value="1"/>
</dbReference>
<dbReference type="SUPFAM" id="SSF55681">
    <property type="entry name" value="Class II aaRS and biotin synthetases"/>
    <property type="match status" value="1"/>
</dbReference>
<evidence type="ECO:0000255" key="1">
    <source>
        <dbReference type="HAMAP-Rule" id="MF_00125"/>
    </source>
</evidence>
<accession>Q606N7</accession>
<organism>
    <name type="scientific">Methylococcus capsulatus (strain ATCC 33009 / NCIMB 11132 / Bath)</name>
    <dbReference type="NCBI Taxonomy" id="243233"/>
    <lineage>
        <taxon>Bacteria</taxon>
        <taxon>Pseudomonadati</taxon>
        <taxon>Pseudomonadota</taxon>
        <taxon>Gammaproteobacteria</taxon>
        <taxon>Methylococcales</taxon>
        <taxon>Methylococcaceae</taxon>
        <taxon>Methylococcus</taxon>
    </lineage>
</organism>
<comment type="function">
    <text evidence="1">Required for the first step of histidine biosynthesis. May allow the feedback regulation of ATP phosphoribosyltransferase activity by histidine.</text>
</comment>
<comment type="pathway">
    <text evidence="1">Amino-acid biosynthesis; L-histidine biosynthesis; L-histidine from 5-phospho-alpha-D-ribose 1-diphosphate: step 1/9.</text>
</comment>
<comment type="subunit">
    <text evidence="1">Heteromultimer composed of HisG and HisZ subunits.</text>
</comment>
<comment type="subcellular location">
    <subcellularLocation>
        <location evidence="1">Cytoplasm</location>
    </subcellularLocation>
</comment>
<comment type="miscellaneous">
    <text>This function is generally fulfilled by the C-terminal part of HisG, which is missing in some bacteria such as this one.</text>
</comment>
<comment type="similarity">
    <text evidence="1">Belongs to the class-II aminoacyl-tRNA synthetase family. HisZ subfamily.</text>
</comment>
<gene>
    <name evidence="1" type="primary">hisZ</name>
    <name type="ordered locus">MCA1979</name>
</gene>
<proteinExistence type="inferred from homology"/>
<sequence length="406" mass="44512">MFPFSYPADDRWLLPEGIEELLPEEAERLELLRRRVLDRFAAWGYRLVMPPLIEFIDSLLTGAGHDLDIQTFKLIDQASGRLLGIRADMTPQVARIDARTHAGDTPGRFCYLGSVLHTQADRLEKSRSPIQFGAELYGHSGRASDLEIIRLMLEVLTTAGVERIHLDLGHVGIFRGLARQAGLTGEQEGELFSLLQQKARPELTAAVASLDIDPPLARMFTELVDLNGRHGVMERARECLSEANAAVHMALEELAVLAERLGDCCPEVPVNFDLAELRGYRYQTGVVFAAFVPGYGREIARGGRYDDIGKVFGRARPATGFSADLKVVLRLSGLGESFVGSGEAIFAPAVSDPALIAAIRELRDAGRIVIEALPGQQGDAAAHGFRSELRRNGERWCVCPVASKDT</sequence>
<reference key="1">
    <citation type="journal article" date="2004" name="PLoS Biol.">
        <title>Genomic insights into methanotrophy: the complete genome sequence of Methylococcus capsulatus (Bath).</title>
        <authorList>
            <person name="Ward N.L."/>
            <person name="Larsen O."/>
            <person name="Sakwa J."/>
            <person name="Bruseth L."/>
            <person name="Khouri H.M."/>
            <person name="Durkin A.S."/>
            <person name="Dimitrov G."/>
            <person name="Jiang L."/>
            <person name="Scanlan D."/>
            <person name="Kang K.H."/>
            <person name="Lewis M.R."/>
            <person name="Nelson K.E."/>
            <person name="Methe B.A."/>
            <person name="Wu M."/>
            <person name="Heidelberg J.F."/>
            <person name="Paulsen I.T."/>
            <person name="Fouts D.E."/>
            <person name="Ravel J."/>
            <person name="Tettelin H."/>
            <person name="Ren Q."/>
            <person name="Read T.D."/>
            <person name="DeBoy R.T."/>
            <person name="Seshadri R."/>
            <person name="Salzberg S.L."/>
            <person name="Jensen H.B."/>
            <person name="Birkeland N.K."/>
            <person name="Nelson W.C."/>
            <person name="Dodson R.J."/>
            <person name="Grindhaug S.H."/>
            <person name="Holt I.E."/>
            <person name="Eidhammer I."/>
            <person name="Jonasen I."/>
            <person name="Vanaken S."/>
            <person name="Utterback T.R."/>
            <person name="Feldblyum T.V."/>
            <person name="Fraser C.M."/>
            <person name="Lillehaug J.R."/>
            <person name="Eisen J.A."/>
        </authorList>
    </citation>
    <scope>NUCLEOTIDE SEQUENCE [LARGE SCALE GENOMIC DNA]</scope>
    <source>
        <strain>ATCC 33009 / NCIMB 11132 / Bath</strain>
    </source>
</reference>